<sequence>LTTGLSSWFHNYGNLLLMLGFLLMIMTMIQWWRDIIRESTFQGFHTTKVYNGLRWGMMLFIVSEICFFFAFFWAYFHSSLAPNTDIGACWPPINIYPLNPFQIPLLNTAILLSSGVSVTWAHHSLMSNKLNPAIHSMTITITLGFYFTFLQMMEYIEASFSISDSIYGSTFFVATGFHGLHVIIGSTFLFMCLIRIIMNHFSST</sequence>
<geneLocation type="mitochondrion"/>
<dbReference type="EC" id="7.1.1.9"/>
<dbReference type="EMBL" id="X83103">
    <property type="protein sequence ID" value="CAA58165.1"/>
    <property type="molecule type" value="Genomic_DNA"/>
</dbReference>
<dbReference type="SMR" id="Q35242"/>
<dbReference type="GO" id="GO:0005743">
    <property type="term" value="C:mitochondrial inner membrane"/>
    <property type="evidence" value="ECO:0007669"/>
    <property type="project" value="UniProtKB-SubCell"/>
</dbReference>
<dbReference type="GO" id="GO:0004129">
    <property type="term" value="F:cytochrome-c oxidase activity"/>
    <property type="evidence" value="ECO:0007669"/>
    <property type="project" value="UniProtKB-EC"/>
</dbReference>
<dbReference type="GO" id="GO:0006123">
    <property type="term" value="P:mitochondrial electron transport, cytochrome c to oxygen"/>
    <property type="evidence" value="ECO:0007669"/>
    <property type="project" value="TreeGrafter"/>
</dbReference>
<dbReference type="CDD" id="cd01665">
    <property type="entry name" value="Cyt_c_Oxidase_III"/>
    <property type="match status" value="1"/>
</dbReference>
<dbReference type="Gene3D" id="1.10.287.70">
    <property type="match status" value="1"/>
</dbReference>
<dbReference type="Gene3D" id="1.20.120.80">
    <property type="entry name" value="Cytochrome c oxidase, subunit III, four-helix bundle"/>
    <property type="match status" value="1"/>
</dbReference>
<dbReference type="InterPro" id="IPR024791">
    <property type="entry name" value="Cyt_c/ubiquinol_Oxase_su3"/>
</dbReference>
<dbReference type="InterPro" id="IPR033945">
    <property type="entry name" value="Cyt_c_oxase_su3_dom"/>
</dbReference>
<dbReference type="InterPro" id="IPR000298">
    <property type="entry name" value="Cyt_c_oxidase-like_su3"/>
</dbReference>
<dbReference type="InterPro" id="IPR035973">
    <property type="entry name" value="Cyt_c_oxidase_su3-like_sf"/>
</dbReference>
<dbReference type="InterPro" id="IPR013833">
    <property type="entry name" value="Cyt_c_oxidase_su3_a-hlx"/>
</dbReference>
<dbReference type="PANTHER" id="PTHR11403:SF7">
    <property type="entry name" value="CYTOCHROME C OXIDASE SUBUNIT 3"/>
    <property type="match status" value="1"/>
</dbReference>
<dbReference type="PANTHER" id="PTHR11403">
    <property type="entry name" value="CYTOCHROME C OXIDASE SUBUNIT III"/>
    <property type="match status" value="1"/>
</dbReference>
<dbReference type="Pfam" id="PF00510">
    <property type="entry name" value="COX3"/>
    <property type="match status" value="1"/>
</dbReference>
<dbReference type="SUPFAM" id="SSF81452">
    <property type="entry name" value="Cytochrome c oxidase subunit III-like"/>
    <property type="match status" value="1"/>
</dbReference>
<dbReference type="PROSITE" id="PS50253">
    <property type="entry name" value="COX3"/>
    <property type="match status" value="1"/>
</dbReference>
<evidence type="ECO:0000250" key="1">
    <source>
        <dbReference type="UniProtKB" id="P00420"/>
    </source>
</evidence>
<evidence type="ECO:0000255" key="2"/>
<evidence type="ECO:0000305" key="3"/>
<gene>
    <name type="primary">COIII</name>
</gene>
<organism>
    <name type="scientific">Enteroctopus dofleini</name>
    <name type="common">North Pacific giant octopus</name>
    <name type="synonym">Octopus dofleini</name>
    <dbReference type="NCBI Taxonomy" id="267067"/>
    <lineage>
        <taxon>Eukaryota</taxon>
        <taxon>Metazoa</taxon>
        <taxon>Spiralia</taxon>
        <taxon>Lophotrochozoa</taxon>
        <taxon>Mollusca</taxon>
        <taxon>Cephalopoda</taxon>
        <taxon>Coleoidea</taxon>
        <taxon>Octopodiformes</taxon>
        <taxon>Octopoda</taxon>
        <taxon>Incirrata</taxon>
        <taxon>Octopodidae</taxon>
        <taxon>Enteroctopus</taxon>
    </lineage>
</organism>
<feature type="chain" id="PRO_0000183814" description="Cytochrome c oxidase subunit 3">
    <location>
        <begin position="1" status="less than"/>
        <end position="204" status="greater than"/>
    </location>
</feature>
<feature type="transmembrane region" description="Helical" evidence="2">
    <location>
        <begin position="12"/>
        <end position="32"/>
    </location>
</feature>
<feature type="transmembrane region" description="Helical" evidence="2">
    <location>
        <begin position="56"/>
        <end position="76"/>
    </location>
</feature>
<feature type="transmembrane region" description="Helical" evidence="2">
    <location>
        <begin position="101"/>
        <end position="121"/>
    </location>
</feature>
<feature type="transmembrane region" description="Helical" evidence="2">
    <location>
        <begin position="133"/>
        <end position="153"/>
    </location>
</feature>
<feature type="transmembrane region" description="Helical" evidence="2">
    <location>
        <begin position="171"/>
        <end position="191"/>
    </location>
</feature>
<feature type="non-terminal residue">
    <location>
        <position position="1"/>
    </location>
</feature>
<feature type="non-terminal residue">
    <location>
        <position position="204"/>
    </location>
</feature>
<comment type="function">
    <text evidence="1">Component of the cytochrome c oxidase, the last enzyme in the mitochondrial electron transport chain which drives oxidative phosphorylation. The respiratory chain contains 3 multisubunit complexes succinate dehydrogenase (complex II, CII), ubiquinol-cytochrome c oxidoreductase (cytochrome b-c1 complex, complex III, CIII) and cytochrome c oxidase (complex IV, CIV), that cooperate to transfer electrons derived from NADH and succinate to molecular oxygen, creating an electrochemical gradient over the inner membrane that drives transmembrane transport and the ATP synthase. Cytochrome c oxidase is the component of the respiratory chain that catalyzes the reduction of oxygen to water. Electrons originating from reduced cytochrome c in the intermembrane space (IMS) are transferred via the dinuclear copper A center (CU(A)) of subunit 2 and heme A of subunit 1 to the active site in subunit 1, a binuclear center (BNC) formed by heme A3 and copper B (CU(B)). The BNC reduces molecular oxygen to 2 water molecules using 4 electrons from cytochrome c in the IMS and 4 protons from the mitochondrial matrix.</text>
</comment>
<comment type="catalytic activity">
    <reaction evidence="1">
        <text>4 Fe(II)-[cytochrome c] + O2 + 8 H(+)(in) = 4 Fe(III)-[cytochrome c] + 2 H2O + 4 H(+)(out)</text>
        <dbReference type="Rhea" id="RHEA:11436"/>
        <dbReference type="Rhea" id="RHEA-COMP:10350"/>
        <dbReference type="Rhea" id="RHEA-COMP:14399"/>
        <dbReference type="ChEBI" id="CHEBI:15377"/>
        <dbReference type="ChEBI" id="CHEBI:15378"/>
        <dbReference type="ChEBI" id="CHEBI:15379"/>
        <dbReference type="ChEBI" id="CHEBI:29033"/>
        <dbReference type="ChEBI" id="CHEBI:29034"/>
        <dbReference type="EC" id="7.1.1.9"/>
    </reaction>
    <physiologicalReaction direction="left-to-right" evidence="1">
        <dbReference type="Rhea" id="RHEA:11437"/>
    </physiologicalReaction>
</comment>
<comment type="subunit">
    <text evidence="1">Component of the cytochrome c oxidase (complex IV, CIV), a multisubunit enzyme composed of a catalytic core of 3 subunits and several supernumerary subunits. The complex exists as a monomer or a dimer and forms supercomplexes (SCs) in the inner mitochondrial membrane with ubiquinol-cytochrome c oxidoreductase (cytochrome b-c1 complex, complex III, CIII).</text>
</comment>
<comment type="subcellular location">
    <subcellularLocation>
        <location evidence="1">Mitochondrion inner membrane</location>
        <topology evidence="1">Multi-pass membrane protein</topology>
    </subcellularLocation>
</comment>
<comment type="similarity">
    <text evidence="3">Belongs to the cytochrome c oxidase subunit 3 family.</text>
</comment>
<keyword id="KW-0472">Membrane</keyword>
<keyword id="KW-0496">Mitochondrion</keyword>
<keyword id="KW-0999">Mitochondrion inner membrane</keyword>
<keyword id="KW-1278">Translocase</keyword>
<keyword id="KW-0812">Transmembrane</keyword>
<keyword id="KW-1133">Transmembrane helix</keyword>
<name>COX3_ENTDO</name>
<reference key="1">
    <citation type="journal article" date="1995" name="Mol. Phylogenet. Evol.">
        <title>The molecular phylogeny of five eastern north Pacific octopus species.</title>
        <authorList>
            <person name="Barriga Sosa I.A."/>
            <person name="Beckenbach K."/>
            <person name="Hartwick B."/>
            <person name="Smith M.J."/>
        </authorList>
    </citation>
    <scope>NUCLEOTIDE SEQUENCE [GENOMIC DNA]</scope>
</reference>
<proteinExistence type="inferred from homology"/>
<accession>Q35242</accession>
<protein>
    <recommendedName>
        <fullName>Cytochrome c oxidase subunit 3</fullName>
        <ecNumber>7.1.1.9</ecNumber>
    </recommendedName>
    <alternativeName>
        <fullName>Cytochrome c oxidase polypeptide III</fullName>
    </alternativeName>
</protein>